<sequence length="192" mass="20856">MYQDLIRNELNEAAETLANFLKDEANIHAIQRAAVLLADSFKAGGKVISCGNGGSHCDAMHFAEELTGRYRENRPGYPAIAISDVSHISCVGNDFGYDHIFSRYVEAVGREGDVLLGISTSGNSANVAKAIEAAREKGMKVITLTGKDGGKMAGSADIEIRVPHFGYADRVQEIHIKVIHILIQLIEKEMVK</sequence>
<reference key="1">
    <citation type="journal article" date="2010" name="PLoS Genet.">
        <title>Genome sequence of the plant growth promoting endophytic bacterium Enterobacter sp. 638.</title>
        <authorList>
            <person name="Taghavi S."/>
            <person name="van der Lelie D."/>
            <person name="Hoffman A."/>
            <person name="Zhang Y.B."/>
            <person name="Walla M.D."/>
            <person name="Vangronsveld J."/>
            <person name="Newman L."/>
            <person name="Monchy S."/>
        </authorList>
    </citation>
    <scope>NUCLEOTIDE SEQUENCE [LARGE SCALE GENOMIC DNA]</scope>
    <source>
        <strain>638</strain>
    </source>
</reference>
<dbReference type="EC" id="5.3.1.28" evidence="1"/>
<dbReference type="EMBL" id="CP000653">
    <property type="protein sequence ID" value="ABP59445.1"/>
    <property type="molecule type" value="Genomic_DNA"/>
</dbReference>
<dbReference type="RefSeq" id="WP_012016166.1">
    <property type="nucleotide sequence ID" value="NC_009436.1"/>
</dbReference>
<dbReference type="SMR" id="A4W6W5"/>
<dbReference type="STRING" id="399742.Ent638_0759"/>
<dbReference type="KEGG" id="ent:Ent638_0759"/>
<dbReference type="eggNOG" id="COG0279">
    <property type="taxonomic scope" value="Bacteria"/>
</dbReference>
<dbReference type="HOGENOM" id="CLU_080999_4_0_6"/>
<dbReference type="OrthoDB" id="9810929at2"/>
<dbReference type="UniPathway" id="UPA00041">
    <property type="reaction ID" value="UER00436"/>
</dbReference>
<dbReference type="Proteomes" id="UP000000230">
    <property type="component" value="Chromosome"/>
</dbReference>
<dbReference type="GO" id="GO:0005737">
    <property type="term" value="C:cytoplasm"/>
    <property type="evidence" value="ECO:0007669"/>
    <property type="project" value="UniProtKB-SubCell"/>
</dbReference>
<dbReference type="GO" id="GO:0097367">
    <property type="term" value="F:carbohydrate derivative binding"/>
    <property type="evidence" value="ECO:0007669"/>
    <property type="project" value="InterPro"/>
</dbReference>
<dbReference type="GO" id="GO:0008968">
    <property type="term" value="F:D-sedoheptulose 7-phosphate isomerase activity"/>
    <property type="evidence" value="ECO:0007669"/>
    <property type="project" value="UniProtKB-UniRule"/>
</dbReference>
<dbReference type="GO" id="GO:0008270">
    <property type="term" value="F:zinc ion binding"/>
    <property type="evidence" value="ECO:0007669"/>
    <property type="project" value="UniProtKB-UniRule"/>
</dbReference>
<dbReference type="GO" id="GO:0005975">
    <property type="term" value="P:carbohydrate metabolic process"/>
    <property type="evidence" value="ECO:0007669"/>
    <property type="project" value="UniProtKB-UniRule"/>
</dbReference>
<dbReference type="GO" id="GO:2001061">
    <property type="term" value="P:D-glycero-D-manno-heptose 7-phosphate biosynthetic process"/>
    <property type="evidence" value="ECO:0007669"/>
    <property type="project" value="UniProtKB-UniPathway"/>
</dbReference>
<dbReference type="CDD" id="cd05006">
    <property type="entry name" value="SIS_GmhA"/>
    <property type="match status" value="1"/>
</dbReference>
<dbReference type="FunFam" id="3.40.50.10490:FF:000013">
    <property type="entry name" value="Phosphoheptose isomerase"/>
    <property type="match status" value="1"/>
</dbReference>
<dbReference type="Gene3D" id="3.40.50.10490">
    <property type="entry name" value="Glucose-6-phosphate isomerase like protein, domain 1"/>
    <property type="match status" value="1"/>
</dbReference>
<dbReference type="HAMAP" id="MF_00067">
    <property type="entry name" value="GmhA"/>
    <property type="match status" value="1"/>
</dbReference>
<dbReference type="InterPro" id="IPR035461">
    <property type="entry name" value="GmhA/DiaA"/>
</dbReference>
<dbReference type="InterPro" id="IPR004515">
    <property type="entry name" value="Phosphoheptose_Isoase"/>
</dbReference>
<dbReference type="InterPro" id="IPR001347">
    <property type="entry name" value="SIS_dom"/>
</dbReference>
<dbReference type="InterPro" id="IPR046348">
    <property type="entry name" value="SIS_dom_sf"/>
</dbReference>
<dbReference type="InterPro" id="IPR050099">
    <property type="entry name" value="SIS_GmhA/DiaA_subfam"/>
</dbReference>
<dbReference type="NCBIfam" id="TIGR00441">
    <property type="entry name" value="gmhA"/>
    <property type="match status" value="1"/>
</dbReference>
<dbReference type="NCBIfam" id="NF001628">
    <property type="entry name" value="PRK00414.1"/>
    <property type="match status" value="1"/>
</dbReference>
<dbReference type="PANTHER" id="PTHR30390:SF7">
    <property type="entry name" value="PHOSPHOHEPTOSE ISOMERASE"/>
    <property type="match status" value="1"/>
</dbReference>
<dbReference type="PANTHER" id="PTHR30390">
    <property type="entry name" value="SEDOHEPTULOSE 7-PHOSPHATE ISOMERASE / DNAA INITIATOR-ASSOCIATING FACTOR FOR REPLICATION INITIATION"/>
    <property type="match status" value="1"/>
</dbReference>
<dbReference type="Pfam" id="PF13580">
    <property type="entry name" value="SIS_2"/>
    <property type="match status" value="1"/>
</dbReference>
<dbReference type="SUPFAM" id="SSF53697">
    <property type="entry name" value="SIS domain"/>
    <property type="match status" value="1"/>
</dbReference>
<dbReference type="PROSITE" id="PS51464">
    <property type="entry name" value="SIS"/>
    <property type="match status" value="1"/>
</dbReference>
<proteinExistence type="inferred from homology"/>
<gene>
    <name evidence="1" type="primary">gmhA</name>
    <name type="ordered locus">Ent638_0759</name>
</gene>
<feature type="chain" id="PRO_1000057451" description="Phosphoheptose isomerase">
    <location>
        <begin position="1"/>
        <end position="192"/>
    </location>
</feature>
<feature type="domain" description="SIS" evidence="1">
    <location>
        <begin position="37"/>
        <end position="192"/>
    </location>
</feature>
<feature type="binding site" evidence="1">
    <location>
        <begin position="52"/>
        <end position="54"/>
    </location>
    <ligand>
        <name>substrate</name>
    </ligand>
</feature>
<feature type="binding site" evidence="1">
    <location>
        <position position="61"/>
    </location>
    <ligand>
        <name>Zn(2+)</name>
        <dbReference type="ChEBI" id="CHEBI:29105"/>
    </ligand>
</feature>
<feature type="binding site" evidence="1">
    <location>
        <position position="65"/>
    </location>
    <ligand>
        <name>substrate</name>
    </ligand>
</feature>
<feature type="binding site" evidence="1">
    <location>
        <position position="65"/>
    </location>
    <ligand>
        <name>Zn(2+)</name>
        <dbReference type="ChEBI" id="CHEBI:29105"/>
    </ligand>
</feature>
<feature type="binding site" evidence="1">
    <location>
        <begin position="93"/>
        <end position="94"/>
    </location>
    <ligand>
        <name>substrate</name>
    </ligand>
</feature>
<feature type="binding site" evidence="1">
    <location>
        <begin position="119"/>
        <end position="121"/>
    </location>
    <ligand>
        <name>substrate</name>
    </ligand>
</feature>
<feature type="binding site" evidence="1">
    <location>
        <position position="124"/>
    </location>
    <ligand>
        <name>substrate</name>
    </ligand>
</feature>
<feature type="binding site" evidence="1">
    <location>
        <position position="172"/>
    </location>
    <ligand>
        <name>substrate</name>
    </ligand>
</feature>
<feature type="binding site" evidence="1">
    <location>
        <position position="172"/>
    </location>
    <ligand>
        <name>Zn(2+)</name>
        <dbReference type="ChEBI" id="CHEBI:29105"/>
    </ligand>
</feature>
<feature type="binding site" evidence="1">
    <location>
        <position position="180"/>
    </location>
    <ligand>
        <name>Zn(2+)</name>
        <dbReference type="ChEBI" id="CHEBI:29105"/>
    </ligand>
</feature>
<evidence type="ECO:0000255" key="1">
    <source>
        <dbReference type="HAMAP-Rule" id="MF_00067"/>
    </source>
</evidence>
<protein>
    <recommendedName>
        <fullName evidence="1">Phosphoheptose isomerase</fullName>
        <ecNumber evidence="1">5.3.1.28</ecNumber>
    </recommendedName>
    <alternativeName>
        <fullName evidence="1">Sedoheptulose 7-phosphate isomerase</fullName>
    </alternativeName>
</protein>
<organism>
    <name type="scientific">Enterobacter sp. (strain 638)</name>
    <dbReference type="NCBI Taxonomy" id="399742"/>
    <lineage>
        <taxon>Bacteria</taxon>
        <taxon>Pseudomonadati</taxon>
        <taxon>Pseudomonadota</taxon>
        <taxon>Gammaproteobacteria</taxon>
        <taxon>Enterobacterales</taxon>
        <taxon>Enterobacteriaceae</taxon>
        <taxon>Enterobacter</taxon>
    </lineage>
</organism>
<comment type="function">
    <text evidence="1">Catalyzes the isomerization of sedoheptulose 7-phosphate in D-glycero-D-manno-heptose 7-phosphate.</text>
</comment>
<comment type="catalytic activity">
    <reaction evidence="1">
        <text>2 D-sedoheptulose 7-phosphate = D-glycero-alpha-D-manno-heptose 7-phosphate + D-glycero-beta-D-manno-heptose 7-phosphate</text>
        <dbReference type="Rhea" id="RHEA:27489"/>
        <dbReference type="ChEBI" id="CHEBI:57483"/>
        <dbReference type="ChEBI" id="CHEBI:60203"/>
        <dbReference type="ChEBI" id="CHEBI:60204"/>
        <dbReference type="EC" id="5.3.1.28"/>
    </reaction>
</comment>
<comment type="cofactor">
    <cofactor evidence="1">
        <name>Zn(2+)</name>
        <dbReference type="ChEBI" id="CHEBI:29105"/>
    </cofactor>
    <text evidence="1">Binds 1 zinc ion per subunit.</text>
</comment>
<comment type="pathway">
    <text evidence="1">Carbohydrate biosynthesis; D-glycero-D-manno-heptose 7-phosphate biosynthesis; D-glycero-alpha-D-manno-heptose 7-phosphate and D-glycero-beta-D-manno-heptose 7-phosphate from sedoheptulose 7-phosphate: step 1/1.</text>
</comment>
<comment type="subunit">
    <text evidence="1">Homotetramer.</text>
</comment>
<comment type="subcellular location">
    <subcellularLocation>
        <location evidence="1">Cytoplasm</location>
    </subcellularLocation>
</comment>
<comment type="miscellaneous">
    <text evidence="1">The reaction produces a racemic mixture of D-glycero-alpha-D-manno-heptose 7-phosphate and D-glycero-beta-D-manno-heptose 7-phosphate.</text>
</comment>
<comment type="similarity">
    <text evidence="1">Belongs to the SIS family. GmhA subfamily.</text>
</comment>
<name>GMHA_ENT38</name>
<accession>A4W6W5</accession>
<keyword id="KW-0119">Carbohydrate metabolism</keyword>
<keyword id="KW-0963">Cytoplasm</keyword>
<keyword id="KW-0413">Isomerase</keyword>
<keyword id="KW-0479">Metal-binding</keyword>
<keyword id="KW-0862">Zinc</keyword>